<reference key="1">
    <citation type="journal article" date="2004" name="J. Mol. Microbiol. Biotechnol.">
        <title>The complete genome sequence of Bacillus licheniformis DSM13, an organism with great industrial potential.</title>
        <authorList>
            <person name="Veith B."/>
            <person name="Herzberg C."/>
            <person name="Steckel S."/>
            <person name="Feesche J."/>
            <person name="Maurer K.H."/>
            <person name="Ehrenreich P."/>
            <person name="Baeumer S."/>
            <person name="Henne A."/>
            <person name="Liesegang H."/>
            <person name="Merkl R."/>
            <person name="Ehrenreich A."/>
            <person name="Gottschalk G."/>
        </authorList>
    </citation>
    <scope>NUCLEOTIDE SEQUENCE [LARGE SCALE GENOMIC DNA]</scope>
    <source>
        <strain>ATCC 14580 / DSM 13 / JCM 2505 / CCUG 7422 / NBRC 12200 / NCIMB 9375 / NCTC 10341 / NRRL NRS-1264 / Gibson 46</strain>
    </source>
</reference>
<reference key="2">
    <citation type="journal article" date="2004" name="Genome Biol.">
        <title>Complete genome sequence of the industrial bacterium Bacillus licheniformis and comparisons with closely related Bacillus species.</title>
        <authorList>
            <person name="Rey M.W."/>
            <person name="Ramaiya P."/>
            <person name="Nelson B.A."/>
            <person name="Brody-Karpin S.D."/>
            <person name="Zaretsky E.J."/>
            <person name="Tang M."/>
            <person name="Lopez de Leon A."/>
            <person name="Xiang H."/>
            <person name="Gusti V."/>
            <person name="Clausen I.G."/>
            <person name="Olsen P.B."/>
            <person name="Rasmussen M.D."/>
            <person name="Andersen J.T."/>
            <person name="Joergensen P.L."/>
            <person name="Larsen T.S."/>
            <person name="Sorokin A."/>
            <person name="Bolotin A."/>
            <person name="Lapidus A."/>
            <person name="Galleron N."/>
            <person name="Ehrlich S.D."/>
            <person name="Berka R.M."/>
        </authorList>
    </citation>
    <scope>NUCLEOTIDE SEQUENCE [LARGE SCALE GENOMIC DNA]</scope>
    <source>
        <strain>ATCC 14580 / DSM 13 / JCM 2505 / CCUG 7422 / NBRC 12200 / NCIMB 9375 / NCTC 10341 / NRRL NRS-1264 / Gibson 46</strain>
    </source>
</reference>
<protein>
    <recommendedName>
        <fullName evidence="1">ClpXP adapter protein SpxH</fullName>
    </recommendedName>
</protein>
<dbReference type="EMBL" id="AE017333">
    <property type="protein sequence ID" value="AAU40156.1"/>
    <property type="molecule type" value="Genomic_DNA"/>
</dbReference>
<dbReference type="EMBL" id="CP000002">
    <property type="protein sequence ID" value="AAU22811.1"/>
    <property type="molecule type" value="Genomic_DNA"/>
</dbReference>
<dbReference type="RefSeq" id="WP_009328822.1">
    <property type="nucleotide sequence ID" value="NC_006322.1"/>
</dbReference>
<dbReference type="SMR" id="Q65LA8"/>
<dbReference type="STRING" id="279010.BL03343"/>
<dbReference type="GeneID" id="92862167"/>
<dbReference type="KEGG" id="bld:BLi01249"/>
<dbReference type="KEGG" id="bli:BL03343"/>
<dbReference type="eggNOG" id="COG2761">
    <property type="taxonomic scope" value="Bacteria"/>
</dbReference>
<dbReference type="HOGENOM" id="CLU_069785_0_0_9"/>
<dbReference type="Proteomes" id="UP000000606">
    <property type="component" value="Chromosome"/>
</dbReference>
<dbReference type="GO" id="GO:0005737">
    <property type="term" value="C:cytoplasm"/>
    <property type="evidence" value="ECO:0007669"/>
    <property type="project" value="UniProtKB-SubCell"/>
</dbReference>
<dbReference type="CDD" id="cd03025">
    <property type="entry name" value="DsbA_FrnE_like"/>
    <property type="match status" value="1"/>
</dbReference>
<dbReference type="Gene3D" id="3.40.30.10">
    <property type="entry name" value="Glutaredoxin"/>
    <property type="match status" value="1"/>
</dbReference>
<dbReference type="Gene3D" id="1.10.472.60">
    <property type="entry name" value="putative protein disulfide isomerase domain"/>
    <property type="match status" value="1"/>
</dbReference>
<dbReference type="HAMAP" id="MF_02245">
    <property type="entry name" value="Adapter_SpxH"/>
    <property type="match status" value="1"/>
</dbReference>
<dbReference type="InterPro" id="IPR046404">
    <property type="entry name" value="Adapter_SpxH"/>
</dbReference>
<dbReference type="InterPro" id="IPR036249">
    <property type="entry name" value="Thioredoxin-like_sf"/>
</dbReference>
<dbReference type="PANTHER" id="PTHR13887:SF47">
    <property type="entry name" value="CLPXP ADAPTER PROTEIN SPXH"/>
    <property type="match status" value="1"/>
</dbReference>
<dbReference type="PANTHER" id="PTHR13887">
    <property type="entry name" value="GLUTATHIONE S-TRANSFERASE KAPPA"/>
    <property type="match status" value="1"/>
</dbReference>
<dbReference type="Pfam" id="PF13743">
    <property type="entry name" value="Thioredoxin_5"/>
    <property type="match status" value="1"/>
</dbReference>
<dbReference type="SUPFAM" id="SSF52833">
    <property type="entry name" value="Thioredoxin-like"/>
    <property type="match status" value="1"/>
</dbReference>
<proteinExistence type="inferred from homology"/>
<sequence>MTLNQRDQFFSHCHGHPQKPMEIYMFVDPLSPECWALEPAIKKLKIRYGRFFTLRIIAACSITALNVQKRKKRRLAEAWEKIACRSGMSCDGTLLHDKALSAPYLASLALKAAELQGRKAGLQFLRCMQESLFLNQQDITEEQVLLAIAEHTQLDLEEFKRDLHSQSAVKALQCDLKIAAEMEVASVPTLTFFNSLREGEGLKVTGNYSYEIYEEVLFEMLGDEPKPSQTPPLELFIEYFQFVADKEIAVVYDWTLEQVEREMKKLAFARKVERVEAKHGMFWRYINEHHDAGPLYQCEK</sequence>
<evidence type="ECO:0000255" key="1">
    <source>
        <dbReference type="HAMAP-Rule" id="MF_02245"/>
    </source>
</evidence>
<feature type="chain" id="PRO_0000278680" description="ClpXP adapter protein SpxH">
    <location>
        <begin position="1"/>
        <end position="300"/>
    </location>
</feature>
<name>SPXH_BACLD</name>
<comment type="function">
    <text evidence="1">Adapter protein required for efficient degradation of Spx by ClpXP under non-stress conditions. Interaction with Spx stabilizes Spx and exposes the C-terminus of Spx for recognition and proteolysis by ClpXP.</text>
</comment>
<comment type="subunit">
    <text evidence="1">Interacts with Spx.</text>
</comment>
<comment type="subcellular location">
    <subcellularLocation>
        <location evidence="1">Cytoplasm</location>
    </subcellularLocation>
</comment>
<comment type="similarity">
    <text evidence="1">Belongs to the SpxH family.</text>
</comment>
<gene>
    <name evidence="1" type="primary">spxH</name>
    <name type="ordered locus">BLi01249</name>
    <name type="ordered locus">BL03343</name>
</gene>
<accession>Q65LA8</accession>
<accession>Q62WP7</accession>
<keyword id="KW-0963">Cytoplasm</keyword>
<keyword id="KW-1185">Reference proteome</keyword>
<organism>
    <name type="scientific">Bacillus licheniformis (strain ATCC 14580 / DSM 13 / JCM 2505 / CCUG 7422 / NBRC 12200 / NCIMB 9375 / NCTC 10341 / NRRL NRS-1264 / Gibson 46)</name>
    <dbReference type="NCBI Taxonomy" id="279010"/>
    <lineage>
        <taxon>Bacteria</taxon>
        <taxon>Bacillati</taxon>
        <taxon>Bacillota</taxon>
        <taxon>Bacilli</taxon>
        <taxon>Bacillales</taxon>
        <taxon>Bacillaceae</taxon>
        <taxon>Bacillus</taxon>
    </lineage>
</organism>